<comment type="function">
    <text evidence="1">Catalyzes the transfer of the phosphoribosyl group of 5-phosphorylribose-1-pyrophosphate (PRPP) to anthranilate to yield N-(5'-phosphoribosyl)-anthranilate (PRA).</text>
</comment>
<comment type="catalytic activity">
    <reaction evidence="1">
        <text>N-(5-phospho-beta-D-ribosyl)anthranilate + diphosphate = 5-phospho-alpha-D-ribose 1-diphosphate + anthranilate</text>
        <dbReference type="Rhea" id="RHEA:11768"/>
        <dbReference type="ChEBI" id="CHEBI:16567"/>
        <dbReference type="ChEBI" id="CHEBI:18277"/>
        <dbReference type="ChEBI" id="CHEBI:33019"/>
        <dbReference type="ChEBI" id="CHEBI:58017"/>
        <dbReference type="EC" id="2.4.2.18"/>
    </reaction>
</comment>
<comment type="cofactor">
    <cofactor evidence="1">
        <name>Mg(2+)</name>
        <dbReference type="ChEBI" id="CHEBI:18420"/>
    </cofactor>
    <text evidence="1">Binds 2 magnesium ions per monomer.</text>
</comment>
<comment type="pathway">
    <text evidence="1">Amino-acid biosynthesis; L-tryptophan biosynthesis; L-tryptophan from chorismate: step 2/5.</text>
</comment>
<comment type="subunit">
    <text evidence="1">Homodimer.</text>
</comment>
<comment type="similarity">
    <text evidence="1">Belongs to the anthranilate phosphoribosyltransferase family.</text>
</comment>
<protein>
    <recommendedName>
        <fullName evidence="1">Anthranilate phosphoribosyltransferase</fullName>
        <ecNumber evidence="1">2.4.2.18</ecNumber>
    </recommendedName>
</protein>
<dbReference type="EC" id="2.4.2.18" evidence="1"/>
<dbReference type="EMBL" id="CP001101">
    <property type="protein sequence ID" value="ACE03562.1"/>
    <property type="molecule type" value="Genomic_DNA"/>
</dbReference>
<dbReference type="SMR" id="B3EMT4"/>
<dbReference type="STRING" id="331678.Cphamn1_0603"/>
<dbReference type="KEGG" id="cpb:Cphamn1_0603"/>
<dbReference type="eggNOG" id="COG0547">
    <property type="taxonomic scope" value="Bacteria"/>
</dbReference>
<dbReference type="HOGENOM" id="CLU_034315_2_1_10"/>
<dbReference type="OrthoDB" id="9806430at2"/>
<dbReference type="UniPathway" id="UPA00035">
    <property type="reaction ID" value="UER00041"/>
</dbReference>
<dbReference type="GO" id="GO:0005829">
    <property type="term" value="C:cytosol"/>
    <property type="evidence" value="ECO:0007669"/>
    <property type="project" value="TreeGrafter"/>
</dbReference>
<dbReference type="GO" id="GO:0004048">
    <property type="term" value="F:anthranilate phosphoribosyltransferase activity"/>
    <property type="evidence" value="ECO:0007669"/>
    <property type="project" value="UniProtKB-UniRule"/>
</dbReference>
<dbReference type="GO" id="GO:0000287">
    <property type="term" value="F:magnesium ion binding"/>
    <property type="evidence" value="ECO:0007669"/>
    <property type="project" value="UniProtKB-UniRule"/>
</dbReference>
<dbReference type="GO" id="GO:0000162">
    <property type="term" value="P:L-tryptophan biosynthetic process"/>
    <property type="evidence" value="ECO:0007669"/>
    <property type="project" value="UniProtKB-UniRule"/>
</dbReference>
<dbReference type="FunFam" id="3.40.1030.10:FF:000002">
    <property type="entry name" value="Anthranilate phosphoribosyltransferase"/>
    <property type="match status" value="1"/>
</dbReference>
<dbReference type="Gene3D" id="3.40.1030.10">
    <property type="entry name" value="Nucleoside phosphorylase/phosphoribosyltransferase catalytic domain"/>
    <property type="match status" value="1"/>
</dbReference>
<dbReference type="Gene3D" id="1.20.970.10">
    <property type="entry name" value="Transferase, Pyrimidine Nucleoside Phosphorylase, Chain C"/>
    <property type="match status" value="1"/>
</dbReference>
<dbReference type="HAMAP" id="MF_00211">
    <property type="entry name" value="TrpD"/>
    <property type="match status" value="1"/>
</dbReference>
<dbReference type="InterPro" id="IPR005940">
    <property type="entry name" value="Anthranilate_Pribosyl_Tfrase"/>
</dbReference>
<dbReference type="InterPro" id="IPR000312">
    <property type="entry name" value="Glycosyl_Trfase_fam3"/>
</dbReference>
<dbReference type="InterPro" id="IPR017459">
    <property type="entry name" value="Glycosyl_Trfase_fam3_N_dom"/>
</dbReference>
<dbReference type="InterPro" id="IPR036320">
    <property type="entry name" value="Glycosyl_Trfase_fam3_N_dom_sf"/>
</dbReference>
<dbReference type="InterPro" id="IPR035902">
    <property type="entry name" value="Nuc_phospho_transferase"/>
</dbReference>
<dbReference type="NCBIfam" id="TIGR01245">
    <property type="entry name" value="trpD"/>
    <property type="match status" value="1"/>
</dbReference>
<dbReference type="PANTHER" id="PTHR43285">
    <property type="entry name" value="ANTHRANILATE PHOSPHORIBOSYLTRANSFERASE"/>
    <property type="match status" value="1"/>
</dbReference>
<dbReference type="PANTHER" id="PTHR43285:SF2">
    <property type="entry name" value="ANTHRANILATE PHOSPHORIBOSYLTRANSFERASE"/>
    <property type="match status" value="1"/>
</dbReference>
<dbReference type="Pfam" id="PF02885">
    <property type="entry name" value="Glycos_trans_3N"/>
    <property type="match status" value="1"/>
</dbReference>
<dbReference type="Pfam" id="PF00591">
    <property type="entry name" value="Glycos_transf_3"/>
    <property type="match status" value="1"/>
</dbReference>
<dbReference type="SUPFAM" id="SSF52418">
    <property type="entry name" value="Nucleoside phosphorylase/phosphoribosyltransferase catalytic domain"/>
    <property type="match status" value="1"/>
</dbReference>
<dbReference type="SUPFAM" id="SSF47648">
    <property type="entry name" value="Nucleoside phosphorylase/phosphoribosyltransferase N-terminal domain"/>
    <property type="match status" value="1"/>
</dbReference>
<gene>
    <name evidence="1" type="primary">trpD</name>
    <name type="ordered locus">Cphamn1_0603</name>
</gene>
<organism>
    <name type="scientific">Chlorobium phaeobacteroides (strain BS1)</name>
    <dbReference type="NCBI Taxonomy" id="331678"/>
    <lineage>
        <taxon>Bacteria</taxon>
        <taxon>Pseudomonadati</taxon>
        <taxon>Chlorobiota</taxon>
        <taxon>Chlorobiia</taxon>
        <taxon>Chlorobiales</taxon>
        <taxon>Chlorobiaceae</taxon>
        <taxon>Chlorobium/Pelodictyon group</taxon>
        <taxon>Chlorobium</taxon>
    </lineage>
</organism>
<name>TRPD_CHLPB</name>
<sequence>MQYKELLHKLLTGTDLSGKEMEECFSGIMLGEYPDSVIAAILALLQKKGVTPEEVAGAYFAIISKALPVQLGDNAVDTCGTGGDQAGTFNISTVAAIIANGAGVPIAKHGNRSVTSRCGSADVLEQLGYRILLPPDKTEMLFRETGFAFLFAPLYHPAMKAVAHIRRELGIKTIFNMLGPLVNPAKVHRQVVGVFDMRVMEIYAQSLIRTGCSHALVVHGKTENGDGLDEASICGPTRIVEIQNGEITCHDVEPETFSLSRCTIAELQGGDSSRNADILLRILDGSATKAQTDAALFSAAMACYVSGRATCIDDGLSKAKGSLESGNASKQFSRILALNAELAGK</sequence>
<accession>B3EMT4</accession>
<keyword id="KW-0028">Amino-acid biosynthesis</keyword>
<keyword id="KW-0057">Aromatic amino acid biosynthesis</keyword>
<keyword id="KW-0328">Glycosyltransferase</keyword>
<keyword id="KW-0460">Magnesium</keyword>
<keyword id="KW-0479">Metal-binding</keyword>
<keyword id="KW-0808">Transferase</keyword>
<keyword id="KW-0822">Tryptophan biosynthesis</keyword>
<feature type="chain" id="PRO_1000099794" description="Anthranilate phosphoribosyltransferase">
    <location>
        <begin position="1"/>
        <end position="345"/>
    </location>
</feature>
<feature type="binding site" evidence="1">
    <location>
        <position position="80"/>
    </location>
    <ligand>
        <name>5-phospho-alpha-D-ribose 1-diphosphate</name>
        <dbReference type="ChEBI" id="CHEBI:58017"/>
    </ligand>
</feature>
<feature type="binding site" evidence="1">
    <location>
        <position position="80"/>
    </location>
    <ligand>
        <name>anthranilate</name>
        <dbReference type="ChEBI" id="CHEBI:16567"/>
        <label>1</label>
    </ligand>
</feature>
<feature type="binding site" evidence="1">
    <location>
        <begin position="83"/>
        <end position="84"/>
    </location>
    <ligand>
        <name>5-phospho-alpha-D-ribose 1-diphosphate</name>
        <dbReference type="ChEBI" id="CHEBI:58017"/>
    </ligand>
</feature>
<feature type="binding site" evidence="1">
    <location>
        <position position="88"/>
    </location>
    <ligand>
        <name>5-phospho-alpha-D-ribose 1-diphosphate</name>
        <dbReference type="ChEBI" id="CHEBI:58017"/>
    </ligand>
</feature>
<feature type="binding site" evidence="1">
    <location>
        <begin position="90"/>
        <end position="93"/>
    </location>
    <ligand>
        <name>5-phospho-alpha-D-ribose 1-diphosphate</name>
        <dbReference type="ChEBI" id="CHEBI:58017"/>
    </ligand>
</feature>
<feature type="binding site" evidence="1">
    <location>
        <position position="92"/>
    </location>
    <ligand>
        <name>Mg(2+)</name>
        <dbReference type="ChEBI" id="CHEBI:18420"/>
        <label>1</label>
    </ligand>
</feature>
<feature type="binding site" evidence="1">
    <location>
        <begin position="108"/>
        <end position="116"/>
    </location>
    <ligand>
        <name>5-phospho-alpha-D-ribose 1-diphosphate</name>
        <dbReference type="ChEBI" id="CHEBI:58017"/>
    </ligand>
</feature>
<feature type="binding site" evidence="1">
    <location>
        <position position="111"/>
    </location>
    <ligand>
        <name>anthranilate</name>
        <dbReference type="ChEBI" id="CHEBI:16567"/>
        <label>1</label>
    </ligand>
</feature>
<feature type="binding site" evidence="1">
    <location>
        <position position="120"/>
    </location>
    <ligand>
        <name>5-phospho-alpha-D-ribose 1-diphosphate</name>
        <dbReference type="ChEBI" id="CHEBI:58017"/>
    </ligand>
</feature>
<feature type="binding site" evidence="1">
    <location>
        <position position="166"/>
    </location>
    <ligand>
        <name>anthranilate</name>
        <dbReference type="ChEBI" id="CHEBI:16567"/>
        <label>2</label>
    </ligand>
</feature>
<feature type="binding site" evidence="1">
    <location>
        <position position="229"/>
    </location>
    <ligand>
        <name>Mg(2+)</name>
        <dbReference type="ChEBI" id="CHEBI:18420"/>
        <label>2</label>
    </ligand>
</feature>
<feature type="binding site" evidence="1">
    <location>
        <position position="230"/>
    </location>
    <ligand>
        <name>Mg(2+)</name>
        <dbReference type="ChEBI" id="CHEBI:18420"/>
        <label>1</label>
    </ligand>
</feature>
<feature type="binding site" evidence="1">
    <location>
        <position position="230"/>
    </location>
    <ligand>
        <name>Mg(2+)</name>
        <dbReference type="ChEBI" id="CHEBI:18420"/>
        <label>2</label>
    </ligand>
</feature>
<evidence type="ECO:0000255" key="1">
    <source>
        <dbReference type="HAMAP-Rule" id="MF_00211"/>
    </source>
</evidence>
<proteinExistence type="inferred from homology"/>
<reference key="1">
    <citation type="submission" date="2008-06" db="EMBL/GenBank/DDBJ databases">
        <title>Complete sequence of Chlorobium phaeobacteroides BS1.</title>
        <authorList>
            <consortium name="US DOE Joint Genome Institute"/>
            <person name="Lucas S."/>
            <person name="Copeland A."/>
            <person name="Lapidus A."/>
            <person name="Glavina del Rio T."/>
            <person name="Dalin E."/>
            <person name="Tice H."/>
            <person name="Bruce D."/>
            <person name="Goodwin L."/>
            <person name="Pitluck S."/>
            <person name="Schmutz J."/>
            <person name="Larimer F."/>
            <person name="Land M."/>
            <person name="Hauser L."/>
            <person name="Kyrpides N."/>
            <person name="Ovchinnikova G."/>
            <person name="Li T."/>
            <person name="Liu Z."/>
            <person name="Zhao F."/>
            <person name="Overmann J."/>
            <person name="Bryant D.A."/>
            <person name="Richardson P."/>
        </authorList>
    </citation>
    <scope>NUCLEOTIDE SEQUENCE [LARGE SCALE GENOMIC DNA]</scope>
    <source>
        <strain>BS1</strain>
    </source>
</reference>